<evidence type="ECO:0000255" key="1">
    <source>
        <dbReference type="PROSITE-ProRule" id="PRU00227"/>
    </source>
</evidence>
<evidence type="ECO:0000256" key="2">
    <source>
        <dbReference type="SAM" id="MobiDB-lite"/>
    </source>
</evidence>
<evidence type="ECO:0000269" key="3">
    <source>
    </source>
</evidence>
<evidence type="ECO:0000303" key="4">
    <source>
    </source>
</evidence>
<protein>
    <recommendedName>
        <fullName evidence="4">Putative transcription factor ecdB</fullName>
    </recommendedName>
</protein>
<feature type="chain" id="PRO_0000443827" description="Putative transcription factor ecdB">
    <location>
        <begin position="1"/>
        <end position="545"/>
    </location>
</feature>
<feature type="DNA-binding region" description="Zn(2)-C6 fungal-type" evidence="1">
    <location>
        <begin position="12"/>
        <end position="39"/>
    </location>
</feature>
<feature type="region of interest" description="Disordered" evidence="2">
    <location>
        <begin position="79"/>
        <end position="99"/>
    </location>
</feature>
<organism>
    <name type="scientific">Aspergillus rugulosus</name>
    <name type="common">Emericella rugulosa</name>
    <dbReference type="NCBI Taxonomy" id="41736"/>
    <lineage>
        <taxon>Eukaryota</taxon>
        <taxon>Fungi</taxon>
        <taxon>Dikarya</taxon>
        <taxon>Ascomycota</taxon>
        <taxon>Pezizomycotina</taxon>
        <taxon>Eurotiomycetes</taxon>
        <taxon>Eurotiomycetidae</taxon>
        <taxon>Eurotiales</taxon>
        <taxon>Aspergillaceae</taxon>
        <taxon>Aspergillus</taxon>
        <taxon>Aspergillus subgen. Nidulantes</taxon>
    </lineage>
</organism>
<proteinExistence type="inferred from homology"/>
<gene>
    <name evidence="4" type="primary">ecdB</name>
</gene>
<keyword id="KW-0238">DNA-binding</keyword>
<keyword id="KW-0479">Metal-binding</keyword>
<keyword id="KW-0539">Nucleus</keyword>
<keyword id="KW-0804">Transcription</keyword>
<keyword id="KW-0805">Transcription regulation</keyword>
<keyword id="KW-0862">Zinc</keyword>
<dbReference type="EMBL" id="JX421684">
    <property type="protein sequence ID" value="AFT91385.1"/>
    <property type="molecule type" value="Genomic_DNA"/>
</dbReference>
<dbReference type="SMR" id="K0E2F6"/>
<dbReference type="GO" id="GO:0005634">
    <property type="term" value="C:nucleus"/>
    <property type="evidence" value="ECO:0007669"/>
    <property type="project" value="UniProtKB-SubCell"/>
</dbReference>
<dbReference type="GO" id="GO:0003677">
    <property type="term" value="F:DNA binding"/>
    <property type="evidence" value="ECO:0007669"/>
    <property type="project" value="UniProtKB-KW"/>
</dbReference>
<dbReference type="GO" id="GO:0000981">
    <property type="term" value="F:DNA-binding transcription factor activity, RNA polymerase II-specific"/>
    <property type="evidence" value="ECO:0007669"/>
    <property type="project" value="InterPro"/>
</dbReference>
<dbReference type="GO" id="GO:0008270">
    <property type="term" value="F:zinc ion binding"/>
    <property type="evidence" value="ECO:0007669"/>
    <property type="project" value="InterPro"/>
</dbReference>
<dbReference type="CDD" id="cd12148">
    <property type="entry name" value="fungal_TF_MHR"/>
    <property type="match status" value="1"/>
</dbReference>
<dbReference type="CDD" id="cd00067">
    <property type="entry name" value="GAL4"/>
    <property type="match status" value="1"/>
</dbReference>
<dbReference type="Gene3D" id="4.10.240.10">
    <property type="entry name" value="Zn(2)-C6 fungal-type DNA-binding domain"/>
    <property type="match status" value="1"/>
</dbReference>
<dbReference type="InterPro" id="IPR053181">
    <property type="entry name" value="EcdB-like_regulator"/>
</dbReference>
<dbReference type="InterPro" id="IPR036864">
    <property type="entry name" value="Zn2-C6_fun-type_DNA-bd_sf"/>
</dbReference>
<dbReference type="InterPro" id="IPR001138">
    <property type="entry name" value="Zn2Cys6_DnaBD"/>
</dbReference>
<dbReference type="PANTHER" id="PTHR47785:SF3">
    <property type="entry name" value="ZN(2)-C6 FUNGAL-TYPE DOMAIN-CONTAINING PROTEIN"/>
    <property type="match status" value="1"/>
</dbReference>
<dbReference type="PANTHER" id="PTHR47785">
    <property type="entry name" value="ZN(II)2CYS6 TRANSCRIPTION FACTOR (EUROFUNG)-RELATED-RELATED"/>
    <property type="match status" value="1"/>
</dbReference>
<dbReference type="Pfam" id="PF00172">
    <property type="entry name" value="Zn_clus"/>
    <property type="match status" value="1"/>
</dbReference>
<dbReference type="SMART" id="SM00066">
    <property type="entry name" value="GAL4"/>
    <property type="match status" value="1"/>
</dbReference>
<dbReference type="SUPFAM" id="SSF57701">
    <property type="entry name" value="Zn2/Cys6 DNA-binding domain"/>
    <property type="match status" value="1"/>
</dbReference>
<dbReference type="PROSITE" id="PS00463">
    <property type="entry name" value="ZN2_CY6_FUNGAL_1"/>
    <property type="match status" value="1"/>
</dbReference>
<dbReference type="PROSITE" id="PS50048">
    <property type="entry name" value="ZN2_CY6_FUNGAL_2"/>
    <property type="match status" value="1"/>
</dbReference>
<comment type="subcellular location">
    <subcellularLocation>
        <location evidence="1">Nucleus</location>
    </subcellularLocation>
</comment>
<comment type="caution">
    <text evidence="3">EcdB, ecdC, ecdD, ecdE and ecdF have previously been identified as being part of the echinocandin B biosynthetic cluster, but it was later realized that this was due to a genome misassembly and these 5 proteins are now considered as artifacts and not part of the cluster.</text>
</comment>
<name>ECDB_ASPRU</name>
<accession>K0E2F6</accession>
<sequence>MVKMRKRLAVACDACRSRRVKCDGQRPSCMGCLSRGLDCSYQRLPEPPATRLETELANVNMRLDYLAMLLSRQSQPQAPPPVLLASARPSSNPLSSHEDSPFRLLATDSIMSVLGLEDHFARRLVQLERASLLASTTTLSRMFFISHQQVTDALIAFSERVHTFYPILPLDFSERYFATLSGPLAPSCQTCLALLVAAIGCIARDPTMGDEYFEAALASLPTVLAECTLASIQCLVFLSIYYCCRLKPCQAHDYCLIASFKIQNLFKSELSVQLDVATSDTWKLDEYIPLPNCRYTWQFSCPPLPGNLAGVSPESASSSSSSISIDSTNSSTSTASDQAQSFFLAEIAMRRMLHRCNSAVAQSSDGRFCYAPSIALELERQLEEWYDYLPASIRFVREPAGGSFNGDQSALSPLSTFLNVQYCCCKLSIYWPAVYQVIQDDKATPQLLEHCQRFIDSYVQLLPRIALAIDKCLIYKWTLSVTFFVTTMAALKVANTAALRAAQHERLHESLALAGTVGWKNTEDSPSLELLRLNLSQHLREAKQK</sequence>
<reference key="1">
    <citation type="journal article" date="2012" name="J. Am. Chem. Soc.">
        <title>Identification and characterization of the echinocandin B biosynthetic gene cluster from Emericella rugulosa NRRL 11440.</title>
        <authorList>
            <person name="Cacho R.A."/>
            <person name="Jiang W."/>
            <person name="Chooi Y.H."/>
            <person name="Walsh C.T."/>
            <person name="Tang Y."/>
        </authorList>
    </citation>
    <scope>NUCLEOTIDE SEQUENCE [GENOMIC DNA]</scope>
    <source>
        <strain>ATCC 58397 / NRRL 11440</strain>
    </source>
</reference>
<reference key="2">
    <citation type="journal article" date="2016" name="BMC Genomics">
        <title>Echinocandin B biosynthesis: a biosynthetic cluster from Aspergillus nidulans NRRL 8112 and reassembly of the subclusters Ecd and Hty from Aspergillus pachycristatus NRRL 11440 reveals a single coherent gene cluster.</title>
        <authorList>
            <person name="Huettel W."/>
            <person name="Youssar L."/>
            <person name="Gruening B.A."/>
            <person name="Guenther S."/>
            <person name="Hugentobler K.G."/>
        </authorList>
    </citation>
    <scope>CLUSTER REVISION</scope>
</reference>